<keyword id="KW-0091">Biomineralization</keyword>
<keyword id="KW-0106">Calcium</keyword>
<keyword id="KW-1015">Disulfide bond</keyword>
<keyword id="KW-0272">Extracellular matrix</keyword>
<keyword id="KW-0325">Glycoprotein</keyword>
<keyword id="KW-0433">Leucine-rich repeat</keyword>
<keyword id="KW-1185">Reference proteome</keyword>
<keyword id="KW-0677">Repeat</keyword>
<keyword id="KW-0964">Secreted</keyword>
<keyword id="KW-0732">Signal</keyword>
<sequence length="373" mass="42573">MKEYVMLLLLAVCSAKPFFSPSHTALKNMMLKDMEDTDDDDNDDDDNSLFPTKEPVNPFFPFDLFPTCPFGCQCYSRVVHCSDLGLTSVPNNIPFDTRMVDLQNNKIKEIKENDFKGLTSLYALILNNNKLTKIHPKTFLTTKKLRRLYLSHNQLSEIPLNLPKSLAELRIHDNKVKKIQKDTFKGMNALHVLEMSANPLENNGIEPGAFEGVTVFHIRIAEAKLTSIPKGLPPTLLELHLDFNKISTVELEDLKRYRELQRLGLGNNRITDIENGTFANIPRVREIHLEHNKLKKIPSGLQELKYLQIIFLHYNSIAKVGVNDFCPTVPKMKKSLYSAISLFNNPMKYWEIQPATFRCVLGRMSVQLGNVGK</sequence>
<proteinExistence type="evidence at protein level"/>
<gene>
    <name type="primary">Aspn</name>
</gene>
<organism>
    <name type="scientific">Mus musculus</name>
    <name type="common">Mouse</name>
    <dbReference type="NCBI Taxonomy" id="10090"/>
    <lineage>
        <taxon>Eukaryota</taxon>
        <taxon>Metazoa</taxon>
        <taxon>Chordata</taxon>
        <taxon>Craniata</taxon>
        <taxon>Vertebrata</taxon>
        <taxon>Euteleostomi</taxon>
        <taxon>Mammalia</taxon>
        <taxon>Eutheria</taxon>
        <taxon>Euarchontoglires</taxon>
        <taxon>Glires</taxon>
        <taxon>Rodentia</taxon>
        <taxon>Myomorpha</taxon>
        <taxon>Muroidea</taxon>
        <taxon>Muridae</taxon>
        <taxon>Murinae</taxon>
        <taxon>Mus</taxon>
        <taxon>Mus</taxon>
    </lineage>
</organism>
<evidence type="ECO:0000250" key="1"/>
<evidence type="ECO:0000250" key="2">
    <source>
        <dbReference type="UniProtKB" id="P21809"/>
    </source>
</evidence>
<evidence type="ECO:0000255" key="3"/>
<evidence type="ECO:0000269" key="4">
    <source>
    </source>
</evidence>
<evidence type="ECO:0000269" key="5">
    <source>
    </source>
</evidence>
<evidence type="ECO:0000269" key="6">
    <source>
    </source>
</evidence>
<evidence type="ECO:0000269" key="7">
    <source>
    </source>
</evidence>
<evidence type="ECO:0000269" key="8">
    <source>
    </source>
</evidence>
<evidence type="ECO:0000269" key="9">
    <source>
    </source>
</evidence>
<evidence type="ECO:0000305" key="10"/>
<accession>Q99MQ4</accession>
<accession>Q9D6A2</accession>
<dbReference type="EMBL" id="AF316825">
    <property type="protein sequence ID" value="AAK35162.1"/>
    <property type="molecule type" value="mRNA"/>
</dbReference>
<dbReference type="EMBL" id="AK014504">
    <property type="status" value="NOT_ANNOTATED_CDS"/>
    <property type="molecule type" value="mRNA"/>
</dbReference>
<dbReference type="EMBL" id="BC034888">
    <property type="protein sequence ID" value="AAH34888.1"/>
    <property type="molecule type" value="mRNA"/>
</dbReference>
<dbReference type="CCDS" id="CCDS26503.1"/>
<dbReference type="RefSeq" id="NP_001165952.1">
    <property type="nucleotide sequence ID" value="NM_001172481.1"/>
</dbReference>
<dbReference type="RefSeq" id="NP_079987.2">
    <property type="nucleotide sequence ID" value="NM_025711.3"/>
</dbReference>
<dbReference type="SMR" id="Q99MQ4"/>
<dbReference type="FunCoup" id="Q99MQ4">
    <property type="interactions" value="61"/>
</dbReference>
<dbReference type="IntAct" id="Q99MQ4">
    <property type="interactions" value="2"/>
</dbReference>
<dbReference type="MINT" id="Q99MQ4"/>
<dbReference type="STRING" id="10090.ENSMUSP00000136728"/>
<dbReference type="GlyCosmos" id="Q99MQ4">
    <property type="glycosylation" value="2 sites, No reported glycans"/>
</dbReference>
<dbReference type="GlyGen" id="Q99MQ4">
    <property type="glycosylation" value="3 sites, 1 N-linked glycan (1 site), 1 O-linked glycan (1 site)"/>
</dbReference>
<dbReference type="PhosphoSitePlus" id="Q99MQ4"/>
<dbReference type="jPOST" id="Q99MQ4"/>
<dbReference type="PaxDb" id="10090-ENSMUSP00000021820"/>
<dbReference type="ProteomicsDB" id="281924"/>
<dbReference type="Pumba" id="Q99MQ4"/>
<dbReference type="Antibodypedia" id="2015">
    <property type="antibodies" value="204 antibodies from 27 providers"/>
</dbReference>
<dbReference type="DNASU" id="66695"/>
<dbReference type="Ensembl" id="ENSMUST00000021820.14">
    <property type="protein sequence ID" value="ENSMUSP00000021820.7"/>
    <property type="gene ID" value="ENSMUSG00000021388.15"/>
</dbReference>
<dbReference type="Ensembl" id="ENSMUST00000177948.2">
    <property type="protein sequence ID" value="ENSMUSP00000136728.2"/>
    <property type="gene ID" value="ENSMUSG00000021388.15"/>
</dbReference>
<dbReference type="GeneID" id="66695"/>
<dbReference type="KEGG" id="mmu:66695"/>
<dbReference type="UCSC" id="uc007qjm.2">
    <property type="organism name" value="mouse"/>
</dbReference>
<dbReference type="AGR" id="MGI:1913945"/>
<dbReference type="CTD" id="54829"/>
<dbReference type="MGI" id="MGI:1913945">
    <property type="gene designation" value="Aspn"/>
</dbReference>
<dbReference type="VEuPathDB" id="HostDB:ENSMUSG00000021388"/>
<dbReference type="eggNOG" id="KOG0619">
    <property type="taxonomic scope" value="Eukaryota"/>
</dbReference>
<dbReference type="GeneTree" id="ENSGT00940000157444"/>
<dbReference type="HOGENOM" id="CLU_000288_186_0_1"/>
<dbReference type="InParanoid" id="Q99MQ4"/>
<dbReference type="OMA" id="INDFCPT"/>
<dbReference type="OrthoDB" id="1111193at2759"/>
<dbReference type="PhylomeDB" id="Q99MQ4"/>
<dbReference type="TreeFam" id="TF334562"/>
<dbReference type="BioGRID-ORCS" id="66695">
    <property type="hits" value="2 hits in 80 CRISPR screens"/>
</dbReference>
<dbReference type="ChiTaRS" id="Aspn">
    <property type="organism name" value="mouse"/>
</dbReference>
<dbReference type="PRO" id="PR:Q99MQ4"/>
<dbReference type="Proteomes" id="UP000000589">
    <property type="component" value="Chromosome 13"/>
</dbReference>
<dbReference type="RNAct" id="Q99MQ4">
    <property type="molecule type" value="protein"/>
</dbReference>
<dbReference type="Bgee" id="ENSMUSG00000021388">
    <property type="expression patterns" value="Expressed in diaphysis of femur and 223 other cell types or tissues"/>
</dbReference>
<dbReference type="ExpressionAtlas" id="Q99MQ4">
    <property type="expression patterns" value="baseline and differential"/>
</dbReference>
<dbReference type="GO" id="GO:0042995">
    <property type="term" value="C:cell projection"/>
    <property type="evidence" value="ECO:0007669"/>
    <property type="project" value="Ensembl"/>
</dbReference>
<dbReference type="GO" id="GO:0062023">
    <property type="term" value="C:collagen-containing extracellular matrix"/>
    <property type="evidence" value="ECO:0007005"/>
    <property type="project" value="BHF-UCL"/>
</dbReference>
<dbReference type="GO" id="GO:0031012">
    <property type="term" value="C:extracellular matrix"/>
    <property type="evidence" value="ECO:0000314"/>
    <property type="project" value="MGI"/>
</dbReference>
<dbReference type="GO" id="GO:0005576">
    <property type="term" value="C:extracellular region"/>
    <property type="evidence" value="ECO:0007669"/>
    <property type="project" value="UniProtKB-KW"/>
</dbReference>
<dbReference type="GO" id="GO:0005509">
    <property type="term" value="F:calcium ion binding"/>
    <property type="evidence" value="ECO:0000250"/>
    <property type="project" value="UniProtKB"/>
</dbReference>
<dbReference type="GO" id="GO:0030282">
    <property type="term" value="P:bone mineralization"/>
    <property type="evidence" value="ECO:0000250"/>
    <property type="project" value="UniProtKB"/>
</dbReference>
<dbReference type="GO" id="GO:0070171">
    <property type="term" value="P:negative regulation of tooth mineralization"/>
    <property type="evidence" value="ECO:0000314"/>
    <property type="project" value="UniProtKB"/>
</dbReference>
<dbReference type="GO" id="GO:0030512">
    <property type="term" value="P:negative regulation of transforming growth factor beta receptor signaling pathway"/>
    <property type="evidence" value="ECO:0000314"/>
    <property type="project" value="UniProtKB"/>
</dbReference>
<dbReference type="GO" id="GO:1902617">
    <property type="term" value="P:response to fluoride"/>
    <property type="evidence" value="ECO:0007669"/>
    <property type="project" value="Ensembl"/>
</dbReference>
<dbReference type="FunFam" id="3.80.10.10:FF:000038">
    <property type="entry name" value="Biglycan"/>
    <property type="match status" value="1"/>
</dbReference>
<dbReference type="Gene3D" id="3.80.10.10">
    <property type="entry name" value="Ribonuclease Inhibitor"/>
    <property type="match status" value="1"/>
</dbReference>
<dbReference type="InterPro" id="IPR001611">
    <property type="entry name" value="Leu-rich_rpt"/>
</dbReference>
<dbReference type="InterPro" id="IPR003591">
    <property type="entry name" value="Leu-rich_rpt_typical-subtyp"/>
</dbReference>
<dbReference type="InterPro" id="IPR032675">
    <property type="entry name" value="LRR_dom_sf"/>
</dbReference>
<dbReference type="InterPro" id="IPR000372">
    <property type="entry name" value="LRRNT"/>
</dbReference>
<dbReference type="InterPro" id="IPR050333">
    <property type="entry name" value="SLRP"/>
</dbReference>
<dbReference type="InterPro" id="IPR016352">
    <property type="entry name" value="SLRP_I_decor/aspor/byglycan"/>
</dbReference>
<dbReference type="PANTHER" id="PTHR45712">
    <property type="entry name" value="AGAP008170-PA"/>
    <property type="match status" value="1"/>
</dbReference>
<dbReference type="PANTHER" id="PTHR45712:SF2">
    <property type="entry name" value="ASPORIN"/>
    <property type="match status" value="1"/>
</dbReference>
<dbReference type="Pfam" id="PF13855">
    <property type="entry name" value="LRR_8"/>
    <property type="match status" value="3"/>
</dbReference>
<dbReference type="Pfam" id="PF01462">
    <property type="entry name" value="LRRNT"/>
    <property type="match status" value="1"/>
</dbReference>
<dbReference type="PIRSF" id="PIRSF002490">
    <property type="entry name" value="SLRP_I"/>
    <property type="match status" value="1"/>
</dbReference>
<dbReference type="SMART" id="SM00369">
    <property type="entry name" value="LRR_TYP"/>
    <property type="match status" value="7"/>
</dbReference>
<dbReference type="SMART" id="SM00013">
    <property type="entry name" value="LRRNT"/>
    <property type="match status" value="1"/>
</dbReference>
<dbReference type="SUPFAM" id="SSF52058">
    <property type="entry name" value="L domain-like"/>
    <property type="match status" value="1"/>
</dbReference>
<dbReference type="PROSITE" id="PS51450">
    <property type="entry name" value="LRR"/>
    <property type="match status" value="7"/>
</dbReference>
<comment type="function">
    <text evidence="1 5 7 8 9">Binds calcium and plays a role in osteoblast-driven collagen biomineralization activity (By similarity). Critical regulator of TGF-beta in articular cartilage and plays an essential role in cartilage homeostasis and osteoarthritis (OA) pathogenesis. Negatively regulates chondrogenesis in the articular cartilage by blocking the TGF-beta/receptor interaction on the cell surface and inhibiting the canonical TGF-beta/Smad signal. Negatively regulates periodontal ligament (PDL) differentiation and mineralization to ensure that the PDL is not ossified and to maintain homeostasis of the tooth-supporting system. Inhibits BMP2-induced cytodifferentiation of PDL cells by preventing its binding to BMPR1B/BMP type-1B receptor, resulting in inhibition of BMP-dependent activation of SMAD proteins. Inhibits the interaction between TGFB1 and TGF-beta receptor type II in the presence of heparin/heparan sulfate in vitro.</text>
</comment>
<comment type="subunit">
    <text evidence="1 5 7 9">Interacts with type I collagen. DCN can inhibit collagen binding (By similarity). Interacts with TGFB1, TGFB2 and TGFB3. DCN, BGN, and FMOD inhibit binding to TGFB1. Interacts with BMP2. Interacts in vitro with type II collagen.</text>
</comment>
<comment type="subcellular location">
    <subcellularLocation>
        <location evidence="1">Secreted</location>
        <location evidence="1">Extracellular space</location>
        <location evidence="1">Extracellular matrix</location>
    </subcellularLocation>
</comment>
<comment type="tissue specificity">
    <text evidence="5 6">Higher expression in heart, also detected in kidney, stomach, testes, and skin but only weakly in lung, skeletal muscle, small intestine, and thymus. Expressed specifically and predominantly in the periodontal ligament (PDL). During tooth development, strong expression is seen in the dental follicle, which is the progenitor tissue that forms cementum, alveolar bone, and the PDL. Expressed in the perichondria of the maxilla, mandible, vertebrae, and long bones. Predominantly expressed in the perichondrium/periosteum of long bones (at protein level).</text>
</comment>
<comment type="developmental stage">
    <text evidence="4">At 12.5 dpc, it is present in the mandibular as well as maxillary components of the first branchial arch. Also detected in the thoracic body wall adjacent to the heart. At 13.5 dpc, it is detected in the mesenchyme lateral to Meckel's cartilage. Pronounced expression is observed in the perichondrium of the humerus, ribs, and scapula. At 14.5 dpc, it is detected in the mesenchymal condensations lateral to Meckel's cartilage, in the perichondrium surrounding the central cartilaginous elements of the vertebra and also in the dermal mesenchyme. At 15.5 dpc, it is expressed in the perichondrium/periosteum of the long bones (i.e. femur, tibia, and fibula), some of the flat bones at the base of the skull (i.e. sphenoid bone), ribs, clavicle, and vertebrae. Also detected in the intramembranous bones of the maxilla and mandible (alveolar bone) and a strong expression is observed in sagittal sections of the subcutaneous muscles or panniculus carnosus of the thorax, trunk, and head/ neck (platysma muscle) region. Very little expression is detected in the major parenchymal organs (with the exception of the large bronchi of the lung). Its expression is prominent in the developing mouse skeleton, particularly in the perichondrium/periosteum of cartilage/bone, and is also found in other specialized connective tissues such as tendon, sclera, the connective tissue sheath surrounding muscle and dermis. In the sclera of the eye it is first detected at 15.5 dpc and stronger expression was detected at 17.5 dpc.</text>
</comment>
<comment type="induction">
    <text evidence="6">By TGFB1. Induction requires ALK5 kinase activity and SMAD3.</text>
</comment>
<comment type="domain">
    <text evidence="1 8">The repeats LRR 9, LRR 10 and LRR 11 are involved in binding type I collagen. The poly-Asp region is involved in binding calcium (By similarity). The LRR 5 repeat can inhibit BMP2-induced cytodifferentiation and may be involved in the interaction with BMP2.</text>
</comment>
<comment type="similarity">
    <text evidence="10">Belongs to the small leucine-rich proteoglycan (SLRP) family. SLRP class I subfamily.</text>
</comment>
<comment type="sequence caution" evidence="10">
    <conflict type="erroneous termination">
        <sequence resource="EMBL" id="AK014504"/>
    </conflict>
    <text>Truncated C-terminus.</text>
</comment>
<reference key="1">
    <citation type="journal article" date="2001" name="J. Biol. Chem.">
        <title>Identification and characterization of asporin. A novel member of the leucine-rich repeat protein family closely related to decorin and biglycan.</title>
        <authorList>
            <person name="Lorenzo P."/>
            <person name="Aspberg A."/>
            <person name="Oennerfjord P."/>
            <person name="Bayliss M.T."/>
            <person name="Neame P.J."/>
            <person name="Heinegaard D."/>
        </authorList>
    </citation>
    <scope>NUCLEOTIDE SEQUENCE [MRNA]</scope>
    <source>
        <strain>C57BL/6 X 129/SvJ</strain>
        <tissue>Aorta</tissue>
    </source>
</reference>
<reference key="2">
    <citation type="journal article" date="2001" name="J. Biol. Chem.">
        <title>Expression pattern and gene characterization of asporin. A newly discovered member of the leucine-rich repeat protein family.</title>
        <authorList>
            <person name="Henry S.P."/>
            <person name="Takanosu M."/>
            <person name="Boyd T.C."/>
            <person name="Mayne P.M."/>
            <person name="Eberspaecher H."/>
            <person name="Zhou W."/>
            <person name="de Crombrugghe B."/>
            <person name="Hoeoek M."/>
            <person name="Mayne R."/>
        </authorList>
    </citation>
    <scope>NUCLEOTIDE SEQUENCE [MRNA]</scope>
    <scope>DEVELOPMENTAL STAGE</scope>
</reference>
<reference key="3">
    <citation type="journal article" date="2005" name="Science">
        <title>The transcriptional landscape of the mammalian genome.</title>
        <authorList>
            <person name="Carninci P."/>
            <person name="Kasukawa T."/>
            <person name="Katayama S."/>
            <person name="Gough J."/>
            <person name="Frith M.C."/>
            <person name="Maeda N."/>
            <person name="Oyama R."/>
            <person name="Ravasi T."/>
            <person name="Lenhard B."/>
            <person name="Wells C."/>
            <person name="Kodzius R."/>
            <person name="Shimokawa K."/>
            <person name="Bajic V.B."/>
            <person name="Brenner S.E."/>
            <person name="Batalov S."/>
            <person name="Forrest A.R."/>
            <person name="Zavolan M."/>
            <person name="Davis M.J."/>
            <person name="Wilming L.G."/>
            <person name="Aidinis V."/>
            <person name="Allen J.E."/>
            <person name="Ambesi-Impiombato A."/>
            <person name="Apweiler R."/>
            <person name="Aturaliya R.N."/>
            <person name="Bailey T.L."/>
            <person name="Bansal M."/>
            <person name="Baxter L."/>
            <person name="Beisel K.W."/>
            <person name="Bersano T."/>
            <person name="Bono H."/>
            <person name="Chalk A.M."/>
            <person name="Chiu K.P."/>
            <person name="Choudhary V."/>
            <person name="Christoffels A."/>
            <person name="Clutterbuck D.R."/>
            <person name="Crowe M.L."/>
            <person name="Dalla E."/>
            <person name="Dalrymple B.P."/>
            <person name="de Bono B."/>
            <person name="Della Gatta G."/>
            <person name="di Bernardo D."/>
            <person name="Down T."/>
            <person name="Engstrom P."/>
            <person name="Fagiolini M."/>
            <person name="Faulkner G."/>
            <person name="Fletcher C.F."/>
            <person name="Fukushima T."/>
            <person name="Furuno M."/>
            <person name="Futaki S."/>
            <person name="Gariboldi M."/>
            <person name="Georgii-Hemming P."/>
            <person name="Gingeras T.R."/>
            <person name="Gojobori T."/>
            <person name="Green R.E."/>
            <person name="Gustincich S."/>
            <person name="Harbers M."/>
            <person name="Hayashi Y."/>
            <person name="Hensch T.K."/>
            <person name="Hirokawa N."/>
            <person name="Hill D."/>
            <person name="Huminiecki L."/>
            <person name="Iacono M."/>
            <person name="Ikeo K."/>
            <person name="Iwama A."/>
            <person name="Ishikawa T."/>
            <person name="Jakt M."/>
            <person name="Kanapin A."/>
            <person name="Katoh M."/>
            <person name="Kawasawa Y."/>
            <person name="Kelso J."/>
            <person name="Kitamura H."/>
            <person name="Kitano H."/>
            <person name="Kollias G."/>
            <person name="Krishnan S.P."/>
            <person name="Kruger A."/>
            <person name="Kummerfeld S.K."/>
            <person name="Kurochkin I.V."/>
            <person name="Lareau L.F."/>
            <person name="Lazarevic D."/>
            <person name="Lipovich L."/>
            <person name="Liu J."/>
            <person name="Liuni S."/>
            <person name="McWilliam S."/>
            <person name="Madan Babu M."/>
            <person name="Madera M."/>
            <person name="Marchionni L."/>
            <person name="Matsuda H."/>
            <person name="Matsuzawa S."/>
            <person name="Miki H."/>
            <person name="Mignone F."/>
            <person name="Miyake S."/>
            <person name="Morris K."/>
            <person name="Mottagui-Tabar S."/>
            <person name="Mulder N."/>
            <person name="Nakano N."/>
            <person name="Nakauchi H."/>
            <person name="Ng P."/>
            <person name="Nilsson R."/>
            <person name="Nishiguchi S."/>
            <person name="Nishikawa S."/>
            <person name="Nori F."/>
            <person name="Ohara O."/>
            <person name="Okazaki Y."/>
            <person name="Orlando V."/>
            <person name="Pang K.C."/>
            <person name="Pavan W.J."/>
            <person name="Pavesi G."/>
            <person name="Pesole G."/>
            <person name="Petrovsky N."/>
            <person name="Piazza S."/>
            <person name="Reed J."/>
            <person name="Reid J.F."/>
            <person name="Ring B.Z."/>
            <person name="Ringwald M."/>
            <person name="Rost B."/>
            <person name="Ruan Y."/>
            <person name="Salzberg S.L."/>
            <person name="Sandelin A."/>
            <person name="Schneider C."/>
            <person name="Schoenbach C."/>
            <person name="Sekiguchi K."/>
            <person name="Semple C.A."/>
            <person name="Seno S."/>
            <person name="Sessa L."/>
            <person name="Sheng Y."/>
            <person name="Shibata Y."/>
            <person name="Shimada H."/>
            <person name="Shimada K."/>
            <person name="Silva D."/>
            <person name="Sinclair B."/>
            <person name="Sperling S."/>
            <person name="Stupka E."/>
            <person name="Sugiura K."/>
            <person name="Sultana R."/>
            <person name="Takenaka Y."/>
            <person name="Taki K."/>
            <person name="Tammoja K."/>
            <person name="Tan S.L."/>
            <person name="Tang S."/>
            <person name="Taylor M.S."/>
            <person name="Tegner J."/>
            <person name="Teichmann S.A."/>
            <person name="Ueda H.R."/>
            <person name="van Nimwegen E."/>
            <person name="Verardo R."/>
            <person name="Wei C.L."/>
            <person name="Yagi K."/>
            <person name="Yamanishi H."/>
            <person name="Zabarovsky E."/>
            <person name="Zhu S."/>
            <person name="Zimmer A."/>
            <person name="Hide W."/>
            <person name="Bult C."/>
            <person name="Grimmond S.M."/>
            <person name="Teasdale R.D."/>
            <person name="Liu E.T."/>
            <person name="Brusic V."/>
            <person name="Quackenbush J."/>
            <person name="Wahlestedt C."/>
            <person name="Mattick J.S."/>
            <person name="Hume D.A."/>
            <person name="Kai C."/>
            <person name="Sasaki D."/>
            <person name="Tomaru Y."/>
            <person name="Fukuda S."/>
            <person name="Kanamori-Katayama M."/>
            <person name="Suzuki M."/>
            <person name="Aoki J."/>
            <person name="Arakawa T."/>
            <person name="Iida J."/>
            <person name="Imamura K."/>
            <person name="Itoh M."/>
            <person name="Kato T."/>
            <person name="Kawaji H."/>
            <person name="Kawagashira N."/>
            <person name="Kawashima T."/>
            <person name="Kojima M."/>
            <person name="Kondo S."/>
            <person name="Konno H."/>
            <person name="Nakano K."/>
            <person name="Ninomiya N."/>
            <person name="Nishio T."/>
            <person name="Okada M."/>
            <person name="Plessy C."/>
            <person name="Shibata K."/>
            <person name="Shiraki T."/>
            <person name="Suzuki S."/>
            <person name="Tagami M."/>
            <person name="Waki K."/>
            <person name="Watahiki A."/>
            <person name="Okamura-Oho Y."/>
            <person name="Suzuki H."/>
            <person name="Kawai J."/>
            <person name="Hayashizaki Y."/>
        </authorList>
    </citation>
    <scope>NUCLEOTIDE SEQUENCE [LARGE SCALE MRNA]</scope>
    <source>
        <strain>C57BL/6J</strain>
        <tissue>Skin</tissue>
    </source>
</reference>
<reference key="4">
    <citation type="journal article" date="2004" name="Genome Res.">
        <title>The status, quality, and expansion of the NIH full-length cDNA project: the Mammalian Gene Collection (MGC).</title>
        <authorList>
            <consortium name="The MGC Project Team"/>
        </authorList>
    </citation>
    <scope>NUCLEOTIDE SEQUENCE [LARGE SCALE MRNA]</scope>
    <source>
        <strain>C57BL/6J</strain>
        <tissue>Mammary gland</tissue>
    </source>
</reference>
<reference key="5">
    <citation type="journal article" date="2007" name="J. Biol. Chem.">
        <title>PLAP-1/asporin, a novel negative regulator of periodontal ligament mineralization.</title>
        <authorList>
            <person name="Yamada S."/>
            <person name="Tomoeda M."/>
            <person name="Ozawa Y."/>
            <person name="Yoneda S."/>
            <person name="Terashima Y."/>
            <person name="Ikezawa K."/>
            <person name="Ikegawa S."/>
            <person name="Saito M."/>
            <person name="Toyosawa S."/>
            <person name="Murakami S."/>
        </authorList>
    </citation>
    <scope>FUNCTION</scope>
    <scope>TISSUE SPECIFICITY</scope>
    <scope>INTERACTION WITH BMP2</scope>
</reference>
<reference key="6">
    <citation type="journal article" date="2007" name="J. Biol. Chem.">
        <title>Mechanisms for asporin function and regulation in articular cartilage.</title>
        <authorList>
            <person name="Nakajima M."/>
            <person name="Kizawa H."/>
            <person name="Saitoh M."/>
            <person name="Kou I."/>
            <person name="Miyazono K."/>
            <person name="Ikegawa S."/>
        </authorList>
    </citation>
    <scope>FUNCTION</scope>
    <scope>INTERACTION WITH TGFB1; TGFB2 AND TGFB3</scope>
</reference>
<reference key="7">
    <citation type="journal article" date="2007" name="J. Biol. Chem.">
        <title>Expression and regulation of the osteoarthritis-associated protein asporin.</title>
        <authorList>
            <person name="Kou I."/>
            <person name="Nakajima M."/>
            <person name="Ikegawa S."/>
        </authorList>
    </citation>
    <scope>INDUCTION BY TGFB1</scope>
    <scope>TISSUE SPECIFICITY</scope>
</reference>
<reference key="8">
    <citation type="journal article" date="2008" name="Biochem. Biophys. Res. Commun.">
        <title>PLAP-1/asporin inhibits activation of BMP receptor via its leucine-rich repeat motif.</title>
        <authorList>
            <person name="Tomoeda M."/>
            <person name="Yamada S."/>
            <person name="Shirai H."/>
            <person name="Ozawa Y."/>
            <person name="Yanagita M."/>
            <person name="Murakami S."/>
        </authorList>
    </citation>
    <scope>FUNCTION</scope>
    <scope>MUTAGENESIS OF ARG-170; GLU-194 AND ARG-219</scope>
    <scope>DOMAIN LRR</scope>
</reference>
<reference key="9">
    <citation type="journal article" date="2010" name="Cell">
        <title>A tissue-specific atlas of mouse protein phosphorylation and expression.</title>
        <authorList>
            <person name="Huttlin E.L."/>
            <person name="Jedrychowski M.P."/>
            <person name="Elias J.E."/>
            <person name="Goswami T."/>
            <person name="Rad R."/>
            <person name="Beausoleil S.A."/>
            <person name="Villen J."/>
            <person name="Haas W."/>
            <person name="Sowa M.E."/>
            <person name="Gygi S.P."/>
        </authorList>
    </citation>
    <scope>IDENTIFICATION BY MASS SPECTROMETRY [LARGE SCALE ANALYSIS]</scope>
    <source>
        <tissue>Brown adipose tissue</tissue>
        <tissue>Heart</tissue>
        <tissue>Pancreas</tissue>
    </source>
</reference>
<reference key="10">
    <citation type="journal article" date="2010" name="J. Bone Miner. Metab.">
        <title>Binding characteristics of the osteoarthritis-associated protein asporin.</title>
        <authorList>
            <person name="Kou I."/>
            <person name="Nakajima M."/>
            <person name="Ikegawa S."/>
        </authorList>
    </citation>
    <scope>FUNCTION</scope>
    <scope>INTERACTION WITH TGFB1 AND TYPE II COLLAGEN</scope>
</reference>
<feature type="signal peptide" evidence="3">
    <location>
        <begin position="1"/>
        <end position="15"/>
    </location>
</feature>
<feature type="propeptide" id="PRO_0000032729" evidence="3">
    <location>
        <begin position="16"/>
        <end position="32"/>
    </location>
</feature>
<feature type="chain" id="PRO_0000032730" description="Asporin">
    <location>
        <begin position="33"/>
        <end position="373"/>
    </location>
</feature>
<feature type="domain" description="LRRNT">
    <location>
        <begin position="59"/>
        <end position="95"/>
    </location>
</feature>
<feature type="repeat" description="LRR 1">
    <location>
        <begin position="96"/>
        <end position="117"/>
    </location>
</feature>
<feature type="repeat" description="LRR 2">
    <location>
        <begin position="120"/>
        <end position="141"/>
    </location>
</feature>
<feature type="repeat" description="LRR 3">
    <location>
        <begin position="144"/>
        <end position="166"/>
    </location>
</feature>
<feature type="repeat" description="LRR 4">
    <location>
        <begin position="167"/>
        <end position="186"/>
    </location>
</feature>
<feature type="repeat" description="LRR 5">
    <location>
        <begin position="189"/>
        <end position="212"/>
    </location>
</feature>
<feature type="repeat" description="LRR 6">
    <location>
        <begin position="235"/>
        <end position="255"/>
    </location>
</feature>
<feature type="repeat" description="LRR 7">
    <location>
        <begin position="259"/>
        <end position="280"/>
    </location>
</feature>
<feature type="repeat" description="LRR 8">
    <location>
        <begin position="283"/>
        <end position="305"/>
    </location>
</feature>
<feature type="repeat" description="LRR 9">
    <location>
        <begin position="306"/>
        <end position="327"/>
    </location>
</feature>
<feature type="repeat" description="LRR 10">
    <location>
        <begin position="328"/>
        <end position="349"/>
    </location>
</feature>
<feature type="repeat" description="LRR 11">
    <location>
        <begin position="350"/>
        <end position="373"/>
    </location>
</feature>
<feature type="region of interest" description="Interaction with TGFB1">
    <location>
        <begin position="159"/>
        <end position="205"/>
    </location>
</feature>
<feature type="glycosylation site" description="O-linked (GalNAc...) serine" evidence="1">
    <location>
        <position position="48"/>
    </location>
</feature>
<feature type="glycosylation site" description="N-linked (GlcNAc...) asparagine" evidence="3">
    <location>
        <position position="275"/>
    </location>
</feature>
<feature type="disulfide bond" evidence="2">
    <location>
        <begin position="68"/>
        <end position="74"/>
    </location>
</feature>
<feature type="disulfide bond" evidence="2">
    <location>
        <begin position="72"/>
        <end position="81"/>
    </location>
</feature>
<feature type="disulfide bond" evidence="2">
    <location>
        <begin position="326"/>
        <end position="359"/>
    </location>
</feature>
<feature type="mutagenesis site" description="Partial inhibition of BMP2-induced cytodifferentiation; when associated with E-219." evidence="8">
    <original>R</original>
    <variation>E</variation>
    <location>
        <position position="170"/>
    </location>
</feature>
<feature type="mutagenesis site" description="Rescues the inhibitory effects of ASPN on BMP2-induced cytodifferentiation." evidence="8">
    <original>E</original>
    <variation>G</variation>
    <variation>K</variation>
    <location>
        <position position="194"/>
    </location>
</feature>
<feature type="mutagenesis site" description="Partial inhibition of BMP2-induced cytodifferentiation; when associated with E-170." evidence="8">
    <original>R</original>
    <variation>E</variation>
    <location>
        <position position="219"/>
    </location>
</feature>
<name>ASPN_MOUSE</name>
<protein>
    <recommendedName>
        <fullName>Asporin</fullName>
    </recommendedName>
    <alternativeName>
        <fullName>Periodontal ligament-associated protein 1</fullName>
        <shortName>PLAP-1</shortName>
    </alternativeName>
</protein>